<proteinExistence type="inferred from homology"/>
<reference key="1">
    <citation type="journal article" date="2003" name="Proc. Natl. Acad. Sci. U.S.A.">
        <title>The complete genome sequence of Chromobacterium violaceum reveals remarkable and exploitable bacterial adaptability.</title>
        <authorList>
            <person name="Vasconcelos A.T.R."/>
            <person name="de Almeida D.F."/>
            <person name="Hungria M."/>
            <person name="Guimaraes C.T."/>
            <person name="Antonio R.V."/>
            <person name="Almeida F.C."/>
            <person name="de Almeida L.G.P."/>
            <person name="de Almeida R."/>
            <person name="Alves-Gomes J.A."/>
            <person name="Andrade E.M."/>
            <person name="Araripe J."/>
            <person name="de Araujo M.F.F."/>
            <person name="Astolfi-Filho S."/>
            <person name="Azevedo V."/>
            <person name="Baptista A.J."/>
            <person name="Bataus L.A.M."/>
            <person name="Batista J.S."/>
            <person name="Belo A."/>
            <person name="van den Berg C."/>
            <person name="Bogo M."/>
            <person name="Bonatto S."/>
            <person name="Bordignon J."/>
            <person name="Brigido M.M."/>
            <person name="Brito C.A."/>
            <person name="Brocchi M."/>
            <person name="Burity H.A."/>
            <person name="Camargo A.A."/>
            <person name="Cardoso D.D.P."/>
            <person name="Carneiro N.P."/>
            <person name="Carraro D.M."/>
            <person name="Carvalho C.M.B."/>
            <person name="Cascardo J.C.M."/>
            <person name="Cavada B.S."/>
            <person name="Chueire L.M.O."/>
            <person name="Creczynski-Pasa T.B."/>
            <person name="Cunha-Junior N.C."/>
            <person name="Fagundes N."/>
            <person name="Falcao C.L."/>
            <person name="Fantinatti F."/>
            <person name="Farias I.P."/>
            <person name="Felipe M.S.S."/>
            <person name="Ferrari L.P."/>
            <person name="Ferro J.A."/>
            <person name="Ferro M.I.T."/>
            <person name="Franco G.R."/>
            <person name="Freitas N.S.A."/>
            <person name="Furlan L.R."/>
            <person name="Gazzinelli R.T."/>
            <person name="Gomes E.A."/>
            <person name="Goncalves P.R."/>
            <person name="Grangeiro T.B."/>
            <person name="Grattapaglia D."/>
            <person name="Grisard E.C."/>
            <person name="Hanna E.S."/>
            <person name="Jardim S.N."/>
            <person name="Laurino J."/>
            <person name="Leoi L.C.T."/>
            <person name="Lima L.F.A."/>
            <person name="Loureiro M.F."/>
            <person name="Lyra M.C.C.P."/>
            <person name="Madeira H.M.F."/>
            <person name="Manfio G.P."/>
            <person name="Maranhao A.Q."/>
            <person name="Martins W.S."/>
            <person name="di Mauro S.M.Z."/>
            <person name="de Medeiros S.R.B."/>
            <person name="Meissner R.V."/>
            <person name="Moreira M.A.M."/>
            <person name="Nascimento F.F."/>
            <person name="Nicolas M.F."/>
            <person name="Oliveira J.G."/>
            <person name="Oliveira S.C."/>
            <person name="Paixao R.F.C."/>
            <person name="Parente J.A."/>
            <person name="Pedrosa F.O."/>
            <person name="Pena S.D.J."/>
            <person name="Pereira J.O."/>
            <person name="Pereira M."/>
            <person name="Pinto L.S.R.C."/>
            <person name="Pinto L.S."/>
            <person name="Porto J.I.R."/>
            <person name="Potrich D.P."/>
            <person name="Ramalho-Neto C.E."/>
            <person name="Reis A.M.M."/>
            <person name="Rigo L.U."/>
            <person name="Rondinelli E."/>
            <person name="Santos E.B.P."/>
            <person name="Santos F.R."/>
            <person name="Schneider M.P.C."/>
            <person name="Seuanez H.N."/>
            <person name="Silva A.M.R."/>
            <person name="da Silva A.L.C."/>
            <person name="Silva D.W."/>
            <person name="Silva R."/>
            <person name="Simoes I.C."/>
            <person name="Simon D."/>
            <person name="Soares C.M.A."/>
            <person name="Soares R.B.A."/>
            <person name="Souza E.M."/>
            <person name="Souza K.R.L."/>
            <person name="Souza R.C."/>
            <person name="Steffens M.B.R."/>
            <person name="Steindel M."/>
            <person name="Teixeira S.R."/>
            <person name="Urmenyi T."/>
            <person name="Vettore A."/>
            <person name="Wassem R."/>
            <person name="Zaha A."/>
            <person name="Simpson A.J.G."/>
        </authorList>
    </citation>
    <scope>NUCLEOTIDE SEQUENCE [LARGE SCALE GENOMIC DNA]</scope>
    <source>
        <strain>ATCC 12472 / DSM 30191 / JCM 1249 / CCUG 213 / NBRC 12614 / NCIMB 9131 / NCTC 9757 / MK</strain>
    </source>
</reference>
<sequence length="187" mass="20907">MKTAQELRAGNVFMVGSDPMVVQKAEFSKSGRNASVVKMKMKNLLTGAGSEAVYRADDKFDVVVLDRKDCTYSYFADPMYVFMDTEFNQYEVEADNLGDTINYIVDGMEDVCQVTFYDGKAISVELPTTVIREVEYTEPAVRGDTSGKVLKPARLVGTTFEVQVPAFVNTGEKIEIDTRTNEFKKRA</sequence>
<organism>
    <name type="scientific">Chromobacterium violaceum (strain ATCC 12472 / DSM 30191 / JCM 1249 / CCUG 213 / NBRC 12614 / NCIMB 9131 / NCTC 9757 / MK)</name>
    <dbReference type="NCBI Taxonomy" id="243365"/>
    <lineage>
        <taxon>Bacteria</taxon>
        <taxon>Pseudomonadati</taxon>
        <taxon>Pseudomonadota</taxon>
        <taxon>Betaproteobacteria</taxon>
        <taxon>Neisseriales</taxon>
        <taxon>Chromobacteriaceae</taxon>
        <taxon>Chromobacterium</taxon>
    </lineage>
</organism>
<protein>
    <recommendedName>
        <fullName evidence="1">Elongation factor P</fullName>
        <shortName evidence="1">EF-P</shortName>
    </recommendedName>
</protein>
<gene>
    <name evidence="1" type="primary">efp</name>
    <name type="ordered locus">CV_1378</name>
</gene>
<accession>Q7NY96</accession>
<keyword id="KW-0963">Cytoplasm</keyword>
<keyword id="KW-0251">Elongation factor</keyword>
<keyword id="KW-0648">Protein biosynthesis</keyword>
<keyword id="KW-1185">Reference proteome</keyword>
<evidence type="ECO:0000255" key="1">
    <source>
        <dbReference type="HAMAP-Rule" id="MF_00141"/>
    </source>
</evidence>
<name>EFP_CHRVO</name>
<comment type="function">
    <text evidence="1">Involved in peptide bond synthesis. Stimulates efficient translation and peptide-bond synthesis on native or reconstituted 70S ribosomes in vitro. Probably functions indirectly by altering the affinity of the ribosome for aminoacyl-tRNA, thus increasing their reactivity as acceptors for peptidyl transferase.</text>
</comment>
<comment type="pathway">
    <text evidence="1">Protein biosynthesis; polypeptide chain elongation.</text>
</comment>
<comment type="subcellular location">
    <subcellularLocation>
        <location evidence="1">Cytoplasm</location>
    </subcellularLocation>
</comment>
<comment type="similarity">
    <text evidence="1">Belongs to the elongation factor P family.</text>
</comment>
<feature type="chain" id="PRO_0000094234" description="Elongation factor P">
    <location>
        <begin position="1"/>
        <end position="187"/>
    </location>
</feature>
<dbReference type="EMBL" id="AE016825">
    <property type="protein sequence ID" value="AAQ59053.1"/>
    <property type="molecule type" value="Genomic_DNA"/>
</dbReference>
<dbReference type="RefSeq" id="WP_011134931.1">
    <property type="nucleotide sequence ID" value="NC_005085.1"/>
</dbReference>
<dbReference type="SMR" id="Q7NY96"/>
<dbReference type="STRING" id="243365.CV_1378"/>
<dbReference type="GeneID" id="66367063"/>
<dbReference type="KEGG" id="cvi:CV_1378"/>
<dbReference type="eggNOG" id="COG0231">
    <property type="taxonomic scope" value="Bacteria"/>
</dbReference>
<dbReference type="HOGENOM" id="CLU_074944_2_1_4"/>
<dbReference type="OrthoDB" id="9801844at2"/>
<dbReference type="UniPathway" id="UPA00345"/>
<dbReference type="Proteomes" id="UP000001424">
    <property type="component" value="Chromosome"/>
</dbReference>
<dbReference type="GO" id="GO:0005737">
    <property type="term" value="C:cytoplasm"/>
    <property type="evidence" value="ECO:0007669"/>
    <property type="project" value="UniProtKB-SubCell"/>
</dbReference>
<dbReference type="GO" id="GO:0003746">
    <property type="term" value="F:translation elongation factor activity"/>
    <property type="evidence" value="ECO:0007669"/>
    <property type="project" value="UniProtKB-UniRule"/>
</dbReference>
<dbReference type="GO" id="GO:0043043">
    <property type="term" value="P:peptide biosynthetic process"/>
    <property type="evidence" value="ECO:0007669"/>
    <property type="project" value="InterPro"/>
</dbReference>
<dbReference type="CDD" id="cd04470">
    <property type="entry name" value="S1_EF-P_repeat_1"/>
    <property type="match status" value="1"/>
</dbReference>
<dbReference type="CDD" id="cd05794">
    <property type="entry name" value="S1_EF-P_repeat_2"/>
    <property type="match status" value="1"/>
</dbReference>
<dbReference type="FunFam" id="2.30.30.30:FF:000003">
    <property type="entry name" value="Elongation factor P"/>
    <property type="match status" value="1"/>
</dbReference>
<dbReference type="FunFam" id="2.40.50.140:FF:000004">
    <property type="entry name" value="Elongation factor P"/>
    <property type="match status" value="1"/>
</dbReference>
<dbReference type="FunFam" id="2.40.50.140:FF:000009">
    <property type="entry name" value="Elongation factor P"/>
    <property type="match status" value="1"/>
</dbReference>
<dbReference type="Gene3D" id="2.30.30.30">
    <property type="match status" value="1"/>
</dbReference>
<dbReference type="Gene3D" id="2.40.50.140">
    <property type="entry name" value="Nucleic acid-binding proteins"/>
    <property type="match status" value="2"/>
</dbReference>
<dbReference type="HAMAP" id="MF_00141">
    <property type="entry name" value="EF_P"/>
    <property type="match status" value="1"/>
</dbReference>
<dbReference type="InterPro" id="IPR015365">
    <property type="entry name" value="Elong-fact-P_C"/>
</dbReference>
<dbReference type="InterPro" id="IPR012340">
    <property type="entry name" value="NA-bd_OB-fold"/>
</dbReference>
<dbReference type="InterPro" id="IPR014722">
    <property type="entry name" value="Rib_uL2_dom2"/>
</dbReference>
<dbReference type="InterPro" id="IPR020599">
    <property type="entry name" value="Transl_elong_fac_P/YeiP"/>
</dbReference>
<dbReference type="InterPro" id="IPR013185">
    <property type="entry name" value="Transl_elong_KOW-like"/>
</dbReference>
<dbReference type="InterPro" id="IPR001059">
    <property type="entry name" value="Transl_elong_P/YeiP_cen"/>
</dbReference>
<dbReference type="InterPro" id="IPR011768">
    <property type="entry name" value="Transl_elongation_fac_P"/>
</dbReference>
<dbReference type="InterPro" id="IPR008991">
    <property type="entry name" value="Translation_prot_SH3-like_sf"/>
</dbReference>
<dbReference type="NCBIfam" id="TIGR00038">
    <property type="entry name" value="efp"/>
    <property type="match status" value="1"/>
</dbReference>
<dbReference type="NCBIfam" id="NF001810">
    <property type="entry name" value="PRK00529.1"/>
    <property type="match status" value="1"/>
</dbReference>
<dbReference type="PANTHER" id="PTHR30053">
    <property type="entry name" value="ELONGATION FACTOR P"/>
    <property type="match status" value="1"/>
</dbReference>
<dbReference type="PANTHER" id="PTHR30053:SF12">
    <property type="entry name" value="ELONGATION FACTOR P (EF-P) FAMILY PROTEIN"/>
    <property type="match status" value="1"/>
</dbReference>
<dbReference type="Pfam" id="PF01132">
    <property type="entry name" value="EFP"/>
    <property type="match status" value="1"/>
</dbReference>
<dbReference type="Pfam" id="PF08207">
    <property type="entry name" value="EFP_N"/>
    <property type="match status" value="1"/>
</dbReference>
<dbReference type="Pfam" id="PF09285">
    <property type="entry name" value="Elong-fact-P_C"/>
    <property type="match status" value="1"/>
</dbReference>
<dbReference type="PIRSF" id="PIRSF005901">
    <property type="entry name" value="EF-P"/>
    <property type="match status" value="1"/>
</dbReference>
<dbReference type="SMART" id="SM01185">
    <property type="entry name" value="EFP"/>
    <property type="match status" value="1"/>
</dbReference>
<dbReference type="SMART" id="SM00841">
    <property type="entry name" value="Elong-fact-P_C"/>
    <property type="match status" value="1"/>
</dbReference>
<dbReference type="SUPFAM" id="SSF50249">
    <property type="entry name" value="Nucleic acid-binding proteins"/>
    <property type="match status" value="2"/>
</dbReference>
<dbReference type="SUPFAM" id="SSF50104">
    <property type="entry name" value="Translation proteins SH3-like domain"/>
    <property type="match status" value="1"/>
</dbReference>